<evidence type="ECO:0000255" key="1">
    <source>
        <dbReference type="HAMAP-Rule" id="MF_01227"/>
    </source>
</evidence>
<evidence type="ECO:0000305" key="2"/>
<proteinExistence type="inferred from homology"/>
<sequence length="542" mass="59728">MATNYIFVTGGVVSSLGKGIAAASLAAILEARGLNVTMMKLDPYINVDPGTMSPTQHGEVFVTQDGAETDLDLGHYERFIRTKMTKRNNFTTGKIYSEVLRKERRGDYLGATVQVIPHITNEIKARVIEGAAGHDVAIVEVGGTVGDIESLPFLEALRQLAVQVGREKTIFMHLTLVPYIPTAGEVKTKPTQHSVKELLSIGIQPDVLICRSDRMVPPNERAKIALFCNVPEKAVISLKDVDSIYRIPALLQSQGLDDLICQRFRLACKEADLSEWEQVLYRQANPTGDVTIGMVGKYVELPDAYKSVNEALKHAGLTNRLNVHIKYIDSQDVETKGIDVLKGVDGILVPGGFGYRGVEGKILTAQYARENNIPYLGICLGMQVAFIEYARHVAGLTQANSSEFDKNCPQPVVGLITEWQDADGSVEQRSENSDLGGTMRLGAQQCHLIEGSKARELYGKETIEERHRHRYEVNNTLLPQIEAAGLKVTGLSADKKLVEIIEVPNHPWFVACQFHPEFTSTPRDGHPLFAGFVKAAKENQKK</sequence>
<protein>
    <recommendedName>
        <fullName evidence="1">CTP synthase</fullName>
        <ecNumber evidence="1">6.3.4.2</ecNumber>
    </recommendedName>
    <alternativeName>
        <fullName evidence="1">Cytidine 5'-triphosphate synthase</fullName>
    </alternativeName>
    <alternativeName>
        <fullName evidence="1">Cytidine triphosphate synthetase</fullName>
        <shortName evidence="1">CTP synthetase</shortName>
        <shortName evidence="1">CTPS</shortName>
    </alternativeName>
    <alternativeName>
        <fullName evidence="1">UTP--ammonia ligase</fullName>
    </alternativeName>
</protein>
<accession>Q65VZ8</accession>
<name>PYRG_MANSM</name>
<feature type="chain" id="PRO_0000266149" description="CTP synthase">
    <location>
        <begin position="1"/>
        <end position="542"/>
    </location>
</feature>
<feature type="domain" description="Glutamine amidotransferase type-1" evidence="1">
    <location>
        <begin position="291"/>
        <end position="542"/>
    </location>
</feature>
<feature type="region of interest" description="Amidoligase domain" evidence="1">
    <location>
        <begin position="1"/>
        <end position="266"/>
    </location>
</feature>
<feature type="active site" description="Nucleophile; for glutamine hydrolysis" evidence="1">
    <location>
        <position position="379"/>
    </location>
</feature>
<feature type="active site" evidence="1">
    <location>
        <position position="515"/>
    </location>
</feature>
<feature type="active site" evidence="1">
    <location>
        <position position="517"/>
    </location>
</feature>
<feature type="binding site" evidence="1">
    <location>
        <position position="14"/>
    </location>
    <ligand>
        <name>CTP</name>
        <dbReference type="ChEBI" id="CHEBI:37563"/>
        <note>allosteric inhibitor</note>
    </ligand>
</feature>
<feature type="binding site" evidence="1">
    <location>
        <position position="14"/>
    </location>
    <ligand>
        <name>UTP</name>
        <dbReference type="ChEBI" id="CHEBI:46398"/>
    </ligand>
</feature>
<feature type="binding site" evidence="1">
    <location>
        <begin position="15"/>
        <end position="20"/>
    </location>
    <ligand>
        <name>ATP</name>
        <dbReference type="ChEBI" id="CHEBI:30616"/>
    </ligand>
</feature>
<feature type="binding site" evidence="1">
    <location>
        <position position="72"/>
    </location>
    <ligand>
        <name>ATP</name>
        <dbReference type="ChEBI" id="CHEBI:30616"/>
    </ligand>
</feature>
<feature type="binding site" evidence="1">
    <location>
        <position position="72"/>
    </location>
    <ligand>
        <name>Mg(2+)</name>
        <dbReference type="ChEBI" id="CHEBI:18420"/>
    </ligand>
</feature>
<feature type="binding site" evidence="1">
    <location>
        <position position="140"/>
    </location>
    <ligand>
        <name>Mg(2+)</name>
        <dbReference type="ChEBI" id="CHEBI:18420"/>
    </ligand>
</feature>
<feature type="binding site" evidence="1">
    <location>
        <begin position="147"/>
        <end position="149"/>
    </location>
    <ligand>
        <name>CTP</name>
        <dbReference type="ChEBI" id="CHEBI:37563"/>
        <note>allosteric inhibitor</note>
    </ligand>
</feature>
<feature type="binding site" evidence="1">
    <location>
        <begin position="187"/>
        <end position="192"/>
    </location>
    <ligand>
        <name>CTP</name>
        <dbReference type="ChEBI" id="CHEBI:37563"/>
        <note>allosteric inhibitor</note>
    </ligand>
</feature>
<feature type="binding site" evidence="1">
    <location>
        <begin position="187"/>
        <end position="192"/>
    </location>
    <ligand>
        <name>UTP</name>
        <dbReference type="ChEBI" id="CHEBI:46398"/>
    </ligand>
</feature>
<feature type="binding site" evidence="1">
    <location>
        <position position="223"/>
    </location>
    <ligand>
        <name>CTP</name>
        <dbReference type="ChEBI" id="CHEBI:37563"/>
        <note>allosteric inhibitor</note>
    </ligand>
</feature>
<feature type="binding site" evidence="1">
    <location>
        <position position="223"/>
    </location>
    <ligand>
        <name>UTP</name>
        <dbReference type="ChEBI" id="CHEBI:46398"/>
    </ligand>
</feature>
<feature type="binding site" evidence="1">
    <location>
        <begin position="239"/>
        <end position="241"/>
    </location>
    <ligand>
        <name>ATP</name>
        <dbReference type="ChEBI" id="CHEBI:30616"/>
    </ligand>
</feature>
<feature type="binding site" evidence="1">
    <location>
        <position position="352"/>
    </location>
    <ligand>
        <name>L-glutamine</name>
        <dbReference type="ChEBI" id="CHEBI:58359"/>
    </ligand>
</feature>
<feature type="binding site" evidence="1">
    <location>
        <begin position="380"/>
        <end position="383"/>
    </location>
    <ligand>
        <name>L-glutamine</name>
        <dbReference type="ChEBI" id="CHEBI:58359"/>
    </ligand>
</feature>
<feature type="binding site" evidence="1">
    <location>
        <position position="403"/>
    </location>
    <ligand>
        <name>L-glutamine</name>
        <dbReference type="ChEBI" id="CHEBI:58359"/>
    </ligand>
</feature>
<feature type="binding site" evidence="1">
    <location>
        <position position="470"/>
    </location>
    <ligand>
        <name>L-glutamine</name>
        <dbReference type="ChEBI" id="CHEBI:58359"/>
    </ligand>
</feature>
<reference key="1">
    <citation type="journal article" date="2004" name="Nat. Biotechnol.">
        <title>The genome sequence of the capnophilic rumen bacterium Mannheimia succiniciproducens.</title>
        <authorList>
            <person name="Hong S.H."/>
            <person name="Kim J.S."/>
            <person name="Lee S.Y."/>
            <person name="In Y.H."/>
            <person name="Choi S.S."/>
            <person name="Rih J.-K."/>
            <person name="Kim C.H."/>
            <person name="Jeong H."/>
            <person name="Hur C.G."/>
            <person name="Kim J.J."/>
        </authorList>
    </citation>
    <scope>NUCLEOTIDE SEQUENCE [LARGE SCALE GENOMIC DNA]</scope>
    <source>
        <strain>KCTC 0769BP / MBEL55E</strain>
    </source>
</reference>
<dbReference type="EC" id="6.3.4.2" evidence="1"/>
<dbReference type="EMBL" id="AE016827">
    <property type="protein sequence ID" value="AAU36862.1"/>
    <property type="status" value="ALT_INIT"/>
    <property type="molecule type" value="Genomic_DNA"/>
</dbReference>
<dbReference type="RefSeq" id="WP_011199437.1">
    <property type="nucleotide sequence ID" value="NC_006300.1"/>
</dbReference>
<dbReference type="SMR" id="Q65VZ8"/>
<dbReference type="STRING" id="221988.MS0255"/>
<dbReference type="MEROPS" id="C26.964"/>
<dbReference type="KEGG" id="msu:MS0255"/>
<dbReference type="eggNOG" id="COG0504">
    <property type="taxonomic scope" value="Bacteria"/>
</dbReference>
<dbReference type="HOGENOM" id="CLU_011675_5_0_6"/>
<dbReference type="OrthoDB" id="9801107at2"/>
<dbReference type="UniPathway" id="UPA00159">
    <property type="reaction ID" value="UER00277"/>
</dbReference>
<dbReference type="Proteomes" id="UP000000607">
    <property type="component" value="Chromosome"/>
</dbReference>
<dbReference type="GO" id="GO:0005829">
    <property type="term" value="C:cytosol"/>
    <property type="evidence" value="ECO:0007669"/>
    <property type="project" value="TreeGrafter"/>
</dbReference>
<dbReference type="GO" id="GO:0005524">
    <property type="term" value="F:ATP binding"/>
    <property type="evidence" value="ECO:0007669"/>
    <property type="project" value="UniProtKB-KW"/>
</dbReference>
<dbReference type="GO" id="GO:0003883">
    <property type="term" value="F:CTP synthase activity"/>
    <property type="evidence" value="ECO:0007669"/>
    <property type="project" value="UniProtKB-UniRule"/>
</dbReference>
<dbReference type="GO" id="GO:0004359">
    <property type="term" value="F:glutaminase activity"/>
    <property type="evidence" value="ECO:0007669"/>
    <property type="project" value="RHEA"/>
</dbReference>
<dbReference type="GO" id="GO:0042802">
    <property type="term" value="F:identical protein binding"/>
    <property type="evidence" value="ECO:0007669"/>
    <property type="project" value="TreeGrafter"/>
</dbReference>
<dbReference type="GO" id="GO:0046872">
    <property type="term" value="F:metal ion binding"/>
    <property type="evidence" value="ECO:0007669"/>
    <property type="project" value="UniProtKB-KW"/>
</dbReference>
<dbReference type="GO" id="GO:0044210">
    <property type="term" value="P:'de novo' CTP biosynthetic process"/>
    <property type="evidence" value="ECO:0007669"/>
    <property type="project" value="UniProtKB-UniRule"/>
</dbReference>
<dbReference type="GO" id="GO:0019856">
    <property type="term" value="P:pyrimidine nucleobase biosynthetic process"/>
    <property type="evidence" value="ECO:0007669"/>
    <property type="project" value="TreeGrafter"/>
</dbReference>
<dbReference type="CDD" id="cd03113">
    <property type="entry name" value="CTPS_N"/>
    <property type="match status" value="1"/>
</dbReference>
<dbReference type="CDD" id="cd01746">
    <property type="entry name" value="GATase1_CTP_Synthase"/>
    <property type="match status" value="1"/>
</dbReference>
<dbReference type="FunFam" id="3.40.50.300:FF:000009">
    <property type="entry name" value="CTP synthase"/>
    <property type="match status" value="1"/>
</dbReference>
<dbReference type="FunFam" id="3.40.50.880:FF:000002">
    <property type="entry name" value="CTP synthase"/>
    <property type="match status" value="1"/>
</dbReference>
<dbReference type="Gene3D" id="3.40.50.880">
    <property type="match status" value="1"/>
</dbReference>
<dbReference type="Gene3D" id="3.40.50.300">
    <property type="entry name" value="P-loop containing nucleotide triphosphate hydrolases"/>
    <property type="match status" value="1"/>
</dbReference>
<dbReference type="HAMAP" id="MF_01227">
    <property type="entry name" value="PyrG"/>
    <property type="match status" value="1"/>
</dbReference>
<dbReference type="InterPro" id="IPR029062">
    <property type="entry name" value="Class_I_gatase-like"/>
</dbReference>
<dbReference type="InterPro" id="IPR004468">
    <property type="entry name" value="CTP_synthase"/>
</dbReference>
<dbReference type="InterPro" id="IPR017456">
    <property type="entry name" value="CTP_synthase_N"/>
</dbReference>
<dbReference type="InterPro" id="IPR017926">
    <property type="entry name" value="GATASE"/>
</dbReference>
<dbReference type="InterPro" id="IPR033828">
    <property type="entry name" value="GATase1_CTP_Synthase"/>
</dbReference>
<dbReference type="InterPro" id="IPR027417">
    <property type="entry name" value="P-loop_NTPase"/>
</dbReference>
<dbReference type="NCBIfam" id="NF003792">
    <property type="entry name" value="PRK05380.1"/>
    <property type="match status" value="1"/>
</dbReference>
<dbReference type="NCBIfam" id="TIGR00337">
    <property type="entry name" value="PyrG"/>
    <property type="match status" value="1"/>
</dbReference>
<dbReference type="PANTHER" id="PTHR11550">
    <property type="entry name" value="CTP SYNTHASE"/>
    <property type="match status" value="1"/>
</dbReference>
<dbReference type="PANTHER" id="PTHR11550:SF0">
    <property type="entry name" value="CTP SYNTHASE-RELATED"/>
    <property type="match status" value="1"/>
</dbReference>
<dbReference type="Pfam" id="PF06418">
    <property type="entry name" value="CTP_synth_N"/>
    <property type="match status" value="1"/>
</dbReference>
<dbReference type="Pfam" id="PF00117">
    <property type="entry name" value="GATase"/>
    <property type="match status" value="1"/>
</dbReference>
<dbReference type="SUPFAM" id="SSF52317">
    <property type="entry name" value="Class I glutamine amidotransferase-like"/>
    <property type="match status" value="1"/>
</dbReference>
<dbReference type="SUPFAM" id="SSF52540">
    <property type="entry name" value="P-loop containing nucleoside triphosphate hydrolases"/>
    <property type="match status" value="1"/>
</dbReference>
<dbReference type="PROSITE" id="PS51273">
    <property type="entry name" value="GATASE_TYPE_1"/>
    <property type="match status" value="1"/>
</dbReference>
<gene>
    <name evidence="1" type="primary">pyrG</name>
    <name type="ordered locus">MS0255</name>
</gene>
<keyword id="KW-0067">ATP-binding</keyword>
<keyword id="KW-0315">Glutamine amidotransferase</keyword>
<keyword id="KW-0436">Ligase</keyword>
<keyword id="KW-0460">Magnesium</keyword>
<keyword id="KW-0479">Metal-binding</keyword>
<keyword id="KW-0547">Nucleotide-binding</keyword>
<keyword id="KW-0665">Pyrimidine biosynthesis</keyword>
<comment type="function">
    <text evidence="1">Catalyzes the ATP-dependent amination of UTP to CTP with either L-glutamine or ammonia as the source of nitrogen. Regulates intracellular CTP levels through interactions with the four ribonucleotide triphosphates.</text>
</comment>
<comment type="catalytic activity">
    <reaction evidence="1">
        <text>UTP + L-glutamine + ATP + H2O = CTP + L-glutamate + ADP + phosphate + 2 H(+)</text>
        <dbReference type="Rhea" id="RHEA:26426"/>
        <dbReference type="ChEBI" id="CHEBI:15377"/>
        <dbReference type="ChEBI" id="CHEBI:15378"/>
        <dbReference type="ChEBI" id="CHEBI:29985"/>
        <dbReference type="ChEBI" id="CHEBI:30616"/>
        <dbReference type="ChEBI" id="CHEBI:37563"/>
        <dbReference type="ChEBI" id="CHEBI:43474"/>
        <dbReference type="ChEBI" id="CHEBI:46398"/>
        <dbReference type="ChEBI" id="CHEBI:58359"/>
        <dbReference type="ChEBI" id="CHEBI:456216"/>
        <dbReference type="EC" id="6.3.4.2"/>
    </reaction>
</comment>
<comment type="catalytic activity">
    <reaction evidence="1">
        <text>L-glutamine + H2O = L-glutamate + NH4(+)</text>
        <dbReference type="Rhea" id="RHEA:15889"/>
        <dbReference type="ChEBI" id="CHEBI:15377"/>
        <dbReference type="ChEBI" id="CHEBI:28938"/>
        <dbReference type="ChEBI" id="CHEBI:29985"/>
        <dbReference type="ChEBI" id="CHEBI:58359"/>
    </reaction>
</comment>
<comment type="catalytic activity">
    <reaction evidence="1">
        <text>UTP + NH4(+) + ATP = CTP + ADP + phosphate + 2 H(+)</text>
        <dbReference type="Rhea" id="RHEA:16597"/>
        <dbReference type="ChEBI" id="CHEBI:15378"/>
        <dbReference type="ChEBI" id="CHEBI:28938"/>
        <dbReference type="ChEBI" id="CHEBI:30616"/>
        <dbReference type="ChEBI" id="CHEBI:37563"/>
        <dbReference type="ChEBI" id="CHEBI:43474"/>
        <dbReference type="ChEBI" id="CHEBI:46398"/>
        <dbReference type="ChEBI" id="CHEBI:456216"/>
    </reaction>
</comment>
<comment type="activity regulation">
    <text evidence="1">Allosterically activated by GTP, when glutamine is the substrate; GTP has no effect on the reaction when ammonia is the substrate. The allosteric effector GTP functions by stabilizing the protein conformation that binds the tetrahedral intermediate(s) formed during glutamine hydrolysis. Inhibited by the product CTP, via allosteric rather than competitive inhibition.</text>
</comment>
<comment type="pathway">
    <text evidence="1">Pyrimidine metabolism; CTP biosynthesis via de novo pathway; CTP from UDP: step 2/2.</text>
</comment>
<comment type="subunit">
    <text evidence="1">Homotetramer.</text>
</comment>
<comment type="miscellaneous">
    <text evidence="1">CTPSs have evolved a hybrid strategy for distinguishing between UTP and CTP. The overlapping regions of the product feedback inhibitory and substrate sites recognize a common feature in both compounds, the triphosphate moiety. To differentiate isosteric substrate and product pyrimidine rings, an additional pocket far from the expected kinase/ligase catalytic site, specifically recognizes the cytosine and ribose portions of the product inhibitor.</text>
</comment>
<comment type="similarity">
    <text evidence="1">Belongs to the CTP synthase family.</text>
</comment>
<comment type="sequence caution" evidence="2">
    <conflict type="erroneous initiation">
        <sequence resource="EMBL-CDS" id="AAU36862"/>
    </conflict>
</comment>
<organism>
    <name type="scientific">Mannheimia succiniciproducens (strain KCTC 0769BP / MBEL55E)</name>
    <dbReference type="NCBI Taxonomy" id="221988"/>
    <lineage>
        <taxon>Bacteria</taxon>
        <taxon>Pseudomonadati</taxon>
        <taxon>Pseudomonadota</taxon>
        <taxon>Gammaproteobacteria</taxon>
        <taxon>Pasteurellales</taxon>
        <taxon>Pasteurellaceae</taxon>
        <taxon>Basfia</taxon>
    </lineage>
</organism>